<dbReference type="EMBL" id="AE009950">
    <property type="protein sequence ID" value="AAL81935.1"/>
    <property type="molecule type" value="Genomic_DNA"/>
</dbReference>
<dbReference type="RefSeq" id="WP_011012952.1">
    <property type="nucleotide sequence ID" value="NZ_CP023154.1"/>
</dbReference>
<dbReference type="PDB" id="4V4N">
    <property type="method" value="EM"/>
    <property type="resolution" value="9.00 A"/>
    <property type="chains" value="E=1-186"/>
</dbReference>
<dbReference type="PDB" id="4V6U">
    <property type="method" value="EM"/>
    <property type="resolution" value="6.60 A"/>
    <property type="chains" value="BE=1-186"/>
</dbReference>
<dbReference type="PDBsum" id="4V4N"/>
<dbReference type="PDBsum" id="4V6U"/>
<dbReference type="SMR" id="Q8U012"/>
<dbReference type="STRING" id="186497.PF1811"/>
<dbReference type="PaxDb" id="186497-PF1811"/>
<dbReference type="KEGG" id="pfu:PF1811"/>
<dbReference type="PATRIC" id="fig|186497.12.peg.1882"/>
<dbReference type="eggNOG" id="arCOG04092">
    <property type="taxonomic scope" value="Archaea"/>
</dbReference>
<dbReference type="HOGENOM" id="CLU_061015_3_0_2"/>
<dbReference type="OrthoDB" id="372044at2157"/>
<dbReference type="PhylomeDB" id="Q8U012"/>
<dbReference type="Proteomes" id="UP000001013">
    <property type="component" value="Chromosome"/>
</dbReference>
<dbReference type="GO" id="GO:1990904">
    <property type="term" value="C:ribonucleoprotein complex"/>
    <property type="evidence" value="ECO:0007669"/>
    <property type="project" value="UniProtKB-KW"/>
</dbReference>
<dbReference type="GO" id="GO:0005840">
    <property type="term" value="C:ribosome"/>
    <property type="evidence" value="ECO:0007669"/>
    <property type="project" value="UniProtKB-KW"/>
</dbReference>
<dbReference type="GO" id="GO:0019843">
    <property type="term" value="F:rRNA binding"/>
    <property type="evidence" value="ECO:0007669"/>
    <property type="project" value="UniProtKB-UniRule"/>
</dbReference>
<dbReference type="GO" id="GO:0003735">
    <property type="term" value="F:structural constituent of ribosome"/>
    <property type="evidence" value="ECO:0007669"/>
    <property type="project" value="InterPro"/>
</dbReference>
<dbReference type="GO" id="GO:0000049">
    <property type="term" value="F:tRNA binding"/>
    <property type="evidence" value="ECO:0007669"/>
    <property type="project" value="UniProtKB-UniRule"/>
</dbReference>
<dbReference type="GO" id="GO:0006412">
    <property type="term" value="P:translation"/>
    <property type="evidence" value="ECO:0007669"/>
    <property type="project" value="UniProtKB-UniRule"/>
</dbReference>
<dbReference type="FunFam" id="3.30.1440.10:FF:000002">
    <property type="entry name" value="60S ribosomal protein L11"/>
    <property type="match status" value="1"/>
</dbReference>
<dbReference type="Gene3D" id="3.30.1440.10">
    <property type="match status" value="1"/>
</dbReference>
<dbReference type="HAMAP" id="MF_01333_A">
    <property type="entry name" value="Ribosomal_uL5_A"/>
    <property type="match status" value="1"/>
</dbReference>
<dbReference type="InterPro" id="IPR002132">
    <property type="entry name" value="Ribosomal_uL5"/>
</dbReference>
<dbReference type="InterPro" id="IPR022804">
    <property type="entry name" value="Ribosomal_uL5_arc"/>
</dbReference>
<dbReference type="InterPro" id="IPR031309">
    <property type="entry name" value="Ribosomal_uL5_C"/>
</dbReference>
<dbReference type="InterPro" id="IPR022803">
    <property type="entry name" value="Ribosomal_uL5_dom_sf"/>
</dbReference>
<dbReference type="InterPro" id="IPR031310">
    <property type="entry name" value="Ribosomal_uL5_N"/>
</dbReference>
<dbReference type="NCBIfam" id="NF003258">
    <property type="entry name" value="PRK04219.1"/>
    <property type="match status" value="1"/>
</dbReference>
<dbReference type="PANTHER" id="PTHR11994">
    <property type="entry name" value="60S RIBOSOMAL PROTEIN L11-RELATED"/>
    <property type="match status" value="1"/>
</dbReference>
<dbReference type="Pfam" id="PF00281">
    <property type="entry name" value="Ribosomal_L5"/>
    <property type="match status" value="1"/>
</dbReference>
<dbReference type="Pfam" id="PF00673">
    <property type="entry name" value="Ribosomal_L5_C"/>
    <property type="match status" value="1"/>
</dbReference>
<dbReference type="PIRSF" id="PIRSF002161">
    <property type="entry name" value="Ribosomal_L5"/>
    <property type="match status" value="1"/>
</dbReference>
<dbReference type="SUPFAM" id="SSF55282">
    <property type="entry name" value="RL5-like"/>
    <property type="match status" value="1"/>
</dbReference>
<proteinExistence type="evidence at protein level"/>
<gene>
    <name evidence="1" type="primary">rpl5</name>
    <name type="ordered locus">PF1811</name>
</gene>
<feature type="chain" id="PRO_0000125065" description="Large ribosomal subunit protein uL5">
    <location>
        <begin position="1"/>
        <end position="186"/>
    </location>
</feature>
<comment type="function">
    <text evidence="1">This is one of the proteins that bind and probably mediate the attachment of the 5S RNA into the large ribosomal subunit, where it forms part of the central protuberance. In the 70S ribosome it contacts protein S13 of the 30S subunit (bridge B1b), connecting the 2 subunits; this bridge is implicated in subunit movement. May contact the P site tRNA; the 5S rRNA and some of its associated proteins might help stabilize positioning of ribosome-bound tRNAs.</text>
</comment>
<comment type="subunit">
    <text evidence="1 2">Part of the 50S ribosomal subunit (PubMed:23222135); contacts the 5S rRNA and probably tRNA. Forms a bridge to the 30S subunit in the 70S ribosome.</text>
</comment>
<comment type="similarity">
    <text evidence="1">Belongs to the universal ribosomal protein uL5 family.</text>
</comment>
<organism>
    <name type="scientific">Pyrococcus furiosus (strain ATCC 43587 / DSM 3638 / JCM 8422 / Vc1)</name>
    <dbReference type="NCBI Taxonomy" id="186497"/>
    <lineage>
        <taxon>Archaea</taxon>
        <taxon>Methanobacteriati</taxon>
        <taxon>Methanobacteriota</taxon>
        <taxon>Thermococci</taxon>
        <taxon>Thermococcales</taxon>
        <taxon>Thermococcaceae</taxon>
        <taxon>Pyrococcus</taxon>
    </lineage>
</organism>
<sequence>MAVEIPNKEQILADWEAHPMRRPRIEKVTINIGVGESGERLTKAEIMLQQLTGQKPIRRKAKKTNRDFGIRRGEPIAVKVTLRGPKAYELLKRLLAAVDNRLKASSFDEHGNVCFGIEEHINIPGVEYDPEIGIFGMDVCVTLERPGFRVARRKRKRAKIPTRHKLTKEEGMVYMMEEFGVEIVEG</sequence>
<name>RL5_PYRFU</name>
<keyword id="KW-0002">3D-structure</keyword>
<keyword id="KW-1185">Reference proteome</keyword>
<keyword id="KW-0687">Ribonucleoprotein</keyword>
<keyword id="KW-0689">Ribosomal protein</keyword>
<keyword id="KW-0694">RNA-binding</keyword>
<keyword id="KW-0699">rRNA-binding</keyword>
<keyword id="KW-0820">tRNA-binding</keyword>
<protein>
    <recommendedName>
        <fullName evidence="1">Large ribosomal subunit protein uL5</fullName>
    </recommendedName>
    <alternativeName>
        <fullName>50S ribosomal protein L5</fullName>
    </alternativeName>
</protein>
<accession>Q8U012</accession>
<evidence type="ECO:0000255" key="1">
    <source>
        <dbReference type="HAMAP-Rule" id="MF_01333"/>
    </source>
</evidence>
<evidence type="ECO:0000269" key="2">
    <source>
    </source>
</evidence>
<evidence type="ECO:0007744" key="3">
    <source>
        <dbReference type="PDB" id="4V6U"/>
    </source>
</evidence>
<reference key="1">
    <citation type="journal article" date="1999" name="Genetics">
        <title>Divergence of the hyperthermophilic archaea Pyrococcus furiosus and P. horikoshii inferred from complete genomic sequences.</title>
        <authorList>
            <person name="Maeder D.L."/>
            <person name="Weiss R.B."/>
            <person name="Dunn D.M."/>
            <person name="Cherry J.L."/>
            <person name="Gonzalez J.M."/>
            <person name="DiRuggiero J."/>
            <person name="Robb F.T."/>
        </authorList>
    </citation>
    <scope>NUCLEOTIDE SEQUENCE [LARGE SCALE GENOMIC DNA]</scope>
    <source>
        <strain>ATCC 43587 / DSM 3638 / JCM 8422 / Vc1</strain>
    </source>
</reference>
<reference evidence="3" key="2">
    <citation type="journal article" date="2013" name="Nucleic Acids Res.">
        <title>Promiscuous behaviour of archaeal ribosomal proteins: implications for eukaryotic ribosome evolution.</title>
        <authorList>
            <person name="Armache J.P."/>
            <person name="Anger A.M."/>
            <person name="Marquez V."/>
            <person name="Franckenberg S."/>
            <person name="Frohlich T."/>
            <person name="Villa E."/>
            <person name="Berninghausen O."/>
            <person name="Thomm M."/>
            <person name="Arnold G.J."/>
            <person name="Beckmann R."/>
            <person name="Wilson D.N."/>
        </authorList>
    </citation>
    <scope>STRUCTURE BY ELECTRON MICROSCOPY (6.60 ANGSTROMS) IN THE 70S RIBOSOME</scope>
    <scope>SUBUNIT</scope>
</reference>